<organism>
    <name type="scientific">Saimiri sciureus</name>
    <name type="common">Common squirrel monkey</name>
    <dbReference type="NCBI Taxonomy" id="9521"/>
    <lineage>
        <taxon>Eukaryota</taxon>
        <taxon>Metazoa</taxon>
        <taxon>Chordata</taxon>
        <taxon>Craniata</taxon>
        <taxon>Vertebrata</taxon>
        <taxon>Euteleostomi</taxon>
        <taxon>Mammalia</taxon>
        <taxon>Eutheria</taxon>
        <taxon>Euarchontoglires</taxon>
        <taxon>Primates</taxon>
        <taxon>Haplorrhini</taxon>
        <taxon>Platyrrhini</taxon>
        <taxon>Cebidae</taxon>
        <taxon>Saimiriinae</taxon>
        <taxon>Saimiri</taxon>
    </lineage>
</organism>
<proteinExistence type="evidence at transcript level"/>
<evidence type="ECO:0000250" key="1"/>
<evidence type="ECO:0000250" key="2">
    <source>
        <dbReference type="UniProtKB" id="P61073"/>
    </source>
</evidence>
<evidence type="ECO:0000250" key="3">
    <source>
        <dbReference type="UniProtKB" id="P70658"/>
    </source>
</evidence>
<evidence type="ECO:0000255" key="4">
    <source>
        <dbReference type="PROSITE-ProRule" id="PRU00521"/>
    </source>
</evidence>
<evidence type="ECO:0000256" key="5">
    <source>
        <dbReference type="SAM" id="MobiDB-lite"/>
    </source>
</evidence>
<evidence type="ECO:0000305" key="6"/>
<gene>
    <name type="primary">CXCR4</name>
</gene>
<accession>Q8HZU0</accession>
<name>CXCR4_SAISC</name>
<keyword id="KW-0965">Cell junction</keyword>
<keyword id="KW-1003">Cell membrane</keyword>
<keyword id="KW-1015">Disulfide bond</keyword>
<keyword id="KW-0967">Endosome</keyword>
<keyword id="KW-0297">G-protein coupled receptor</keyword>
<keyword id="KW-0325">Glycoprotein</keyword>
<keyword id="KW-1017">Isopeptide bond</keyword>
<keyword id="KW-0458">Lysosome</keyword>
<keyword id="KW-0472">Membrane</keyword>
<keyword id="KW-0597">Phosphoprotein</keyword>
<keyword id="KW-0654">Proteoglycan</keyword>
<keyword id="KW-0675">Receptor</keyword>
<keyword id="KW-0765">Sulfation</keyword>
<keyword id="KW-0807">Transducer</keyword>
<keyword id="KW-0812">Transmembrane</keyword>
<keyword id="KW-1133">Transmembrane helix</keyword>
<keyword id="KW-0832">Ubl conjugation</keyword>
<protein>
    <recommendedName>
        <fullName>C-X-C chemokine receptor type 4</fullName>
        <shortName>CXC-R4</shortName>
        <shortName>CXCR-4</shortName>
    </recommendedName>
    <cdAntigenName>CD184</cdAntigenName>
</protein>
<dbReference type="EMBL" id="AF452613">
    <property type="protein sequence ID" value="AAN14529.1"/>
    <property type="molecule type" value="mRNA"/>
</dbReference>
<dbReference type="SMR" id="Q8HZU0"/>
<dbReference type="GlyCosmos" id="Q8HZU0">
    <property type="glycosylation" value="2 sites, No reported glycans"/>
</dbReference>
<dbReference type="GO" id="GO:0070161">
    <property type="term" value="C:anchoring junction"/>
    <property type="evidence" value="ECO:0007669"/>
    <property type="project" value="UniProtKB-SubCell"/>
</dbReference>
<dbReference type="GO" id="GO:0005769">
    <property type="term" value="C:early endosome"/>
    <property type="evidence" value="ECO:0000250"/>
    <property type="project" value="UniProtKB"/>
</dbReference>
<dbReference type="GO" id="GO:0009897">
    <property type="term" value="C:external side of plasma membrane"/>
    <property type="evidence" value="ECO:0007669"/>
    <property type="project" value="TreeGrafter"/>
</dbReference>
<dbReference type="GO" id="GO:0005770">
    <property type="term" value="C:late endosome"/>
    <property type="evidence" value="ECO:0000250"/>
    <property type="project" value="UniProtKB"/>
</dbReference>
<dbReference type="GO" id="GO:0005764">
    <property type="term" value="C:lysosome"/>
    <property type="evidence" value="ECO:0000250"/>
    <property type="project" value="UniProtKB"/>
</dbReference>
<dbReference type="GO" id="GO:0005886">
    <property type="term" value="C:plasma membrane"/>
    <property type="evidence" value="ECO:0000250"/>
    <property type="project" value="UniProtKB"/>
</dbReference>
<dbReference type="GO" id="GO:0019957">
    <property type="term" value="F:C-C chemokine binding"/>
    <property type="evidence" value="ECO:0007669"/>
    <property type="project" value="TreeGrafter"/>
</dbReference>
<dbReference type="GO" id="GO:0016493">
    <property type="term" value="F:C-C chemokine receptor activity"/>
    <property type="evidence" value="ECO:0007669"/>
    <property type="project" value="TreeGrafter"/>
</dbReference>
<dbReference type="GO" id="GO:0038147">
    <property type="term" value="F:C-X-C motif chemokine 12 receptor activity"/>
    <property type="evidence" value="ECO:0000250"/>
    <property type="project" value="UniProtKB"/>
</dbReference>
<dbReference type="GO" id="GO:0007420">
    <property type="term" value="P:brain development"/>
    <property type="evidence" value="ECO:0007669"/>
    <property type="project" value="TreeGrafter"/>
</dbReference>
<dbReference type="GO" id="GO:0019722">
    <property type="term" value="P:calcium-mediated signaling"/>
    <property type="evidence" value="ECO:0007669"/>
    <property type="project" value="TreeGrafter"/>
</dbReference>
<dbReference type="GO" id="GO:0060326">
    <property type="term" value="P:cell chemotaxis"/>
    <property type="evidence" value="ECO:0007669"/>
    <property type="project" value="TreeGrafter"/>
</dbReference>
<dbReference type="GO" id="GO:0071345">
    <property type="term" value="P:cellular response to cytokine stimulus"/>
    <property type="evidence" value="ECO:0000250"/>
    <property type="project" value="UniProtKB"/>
</dbReference>
<dbReference type="GO" id="GO:0038160">
    <property type="term" value="P:CXCL12-activated CXCR4 signaling pathway"/>
    <property type="evidence" value="ECO:0000250"/>
    <property type="project" value="UniProtKB"/>
</dbReference>
<dbReference type="GO" id="GO:0006955">
    <property type="term" value="P:immune response"/>
    <property type="evidence" value="ECO:0007669"/>
    <property type="project" value="TreeGrafter"/>
</dbReference>
<dbReference type="GO" id="GO:0022008">
    <property type="term" value="P:neurogenesis"/>
    <property type="evidence" value="ECO:0007669"/>
    <property type="project" value="TreeGrafter"/>
</dbReference>
<dbReference type="GO" id="GO:0007204">
    <property type="term" value="P:positive regulation of cytosolic calcium ion concentration"/>
    <property type="evidence" value="ECO:0007669"/>
    <property type="project" value="TreeGrafter"/>
</dbReference>
<dbReference type="CDD" id="cd15179">
    <property type="entry name" value="7tmA_CXCR4"/>
    <property type="match status" value="1"/>
</dbReference>
<dbReference type="FunFam" id="1.20.1070.10:FF:000063">
    <property type="entry name" value="C-X-C chemokine receptor type 4"/>
    <property type="match status" value="1"/>
</dbReference>
<dbReference type="Gene3D" id="1.20.1070.10">
    <property type="entry name" value="Rhodopsin 7-helix transmembrane proteins"/>
    <property type="match status" value="1"/>
</dbReference>
<dbReference type="InterPro" id="IPR050119">
    <property type="entry name" value="CCR1-9-like"/>
</dbReference>
<dbReference type="InterPro" id="IPR022726">
    <property type="entry name" value="Chemokine_CXCR4_N_dom"/>
</dbReference>
<dbReference type="InterPro" id="IPR000355">
    <property type="entry name" value="Chemokine_rcpt"/>
</dbReference>
<dbReference type="InterPro" id="IPR001277">
    <property type="entry name" value="CXCR4/ACKR2"/>
</dbReference>
<dbReference type="InterPro" id="IPR000276">
    <property type="entry name" value="GPCR_Rhodpsn"/>
</dbReference>
<dbReference type="InterPro" id="IPR017452">
    <property type="entry name" value="GPCR_Rhodpsn_7TM"/>
</dbReference>
<dbReference type="PANTHER" id="PTHR10489:SF594">
    <property type="entry name" value="C-X-C CHEMOKINE RECEPTOR TYPE 4"/>
    <property type="match status" value="1"/>
</dbReference>
<dbReference type="PANTHER" id="PTHR10489">
    <property type="entry name" value="CELL ADHESION MOLECULE"/>
    <property type="match status" value="1"/>
</dbReference>
<dbReference type="Pfam" id="PF00001">
    <property type="entry name" value="7tm_1"/>
    <property type="match status" value="1"/>
</dbReference>
<dbReference type="Pfam" id="PF12109">
    <property type="entry name" value="CXCR4_N"/>
    <property type="match status" value="1"/>
</dbReference>
<dbReference type="PRINTS" id="PR00657">
    <property type="entry name" value="CCCHEMOKINER"/>
</dbReference>
<dbReference type="PRINTS" id="PR00645">
    <property type="entry name" value="CXCCHMKINER4"/>
</dbReference>
<dbReference type="PRINTS" id="PR00237">
    <property type="entry name" value="GPCRRHODOPSN"/>
</dbReference>
<dbReference type="SUPFAM" id="SSF81321">
    <property type="entry name" value="Family A G protein-coupled receptor-like"/>
    <property type="match status" value="1"/>
</dbReference>
<dbReference type="PROSITE" id="PS00237">
    <property type="entry name" value="G_PROTEIN_RECEP_F1_1"/>
    <property type="match status" value="1"/>
</dbReference>
<dbReference type="PROSITE" id="PS50262">
    <property type="entry name" value="G_PROTEIN_RECEP_F1_2"/>
    <property type="match status" value="1"/>
</dbReference>
<reference key="1">
    <citation type="journal article" date="2002" name="J. Exp. Med.">
        <title>Blockade of HIV-1 infection of New World monkey cells occurs primarily at the stage of virus entry.</title>
        <authorList>
            <person name="LaBonte J.A."/>
            <person name="Babcock G.J."/>
            <person name="Patel T."/>
            <person name="Sodroski J."/>
        </authorList>
    </citation>
    <scope>NUCLEOTIDE SEQUENCE [MRNA]</scope>
</reference>
<sequence>MEGISIYTSDNYTEEMGSGDYDSIKEPCFREENAHFNRIFLPTIYSIIFLTGIVGNGLVILVMGYQKKLRSMTDKYRLHLSVADLLFVITLPFWAVDAVANWYFGKFLCKAVHVIYTVNLYSSVLILAFISLDRYLAIVHATNSQRPRKLLAEKVVYVGVWIPALLLTIPDFIFANVSEADDRYICDRFYPNDLWVVVFQFQHIMVGLILPGIVILSCYCIIISKLSHSKGHQKRKALKTTVILILAFFACWLPYYIGISIDSFILLEIIRQGCEFENTVHKWISITEALAFFHCCLNPILYAFLGAKFKTSAQHALTSVSRGSSLKILSKGKRGGHSSVSTESESSSFHSS</sequence>
<feature type="chain" id="PRO_0000247983" description="C-X-C chemokine receptor type 4">
    <location>
        <begin position="1"/>
        <end position="352"/>
    </location>
</feature>
<feature type="topological domain" description="Extracellular" evidence="6">
    <location>
        <begin position="1"/>
        <end position="38"/>
    </location>
</feature>
<feature type="transmembrane region" description="Helical; Name=1" evidence="2">
    <location>
        <begin position="39"/>
        <end position="63"/>
    </location>
</feature>
<feature type="topological domain" description="Cytoplasmic" evidence="6">
    <location>
        <begin position="64"/>
        <end position="77"/>
    </location>
</feature>
<feature type="transmembrane region" description="Helical; Name=2" evidence="2">
    <location>
        <begin position="78"/>
        <end position="99"/>
    </location>
</feature>
<feature type="topological domain" description="Extracellular" evidence="6">
    <location>
        <begin position="100"/>
        <end position="110"/>
    </location>
</feature>
<feature type="transmembrane region" description="Helical; Name=3" evidence="2">
    <location>
        <begin position="111"/>
        <end position="130"/>
    </location>
</feature>
<feature type="topological domain" description="Cytoplasmic" evidence="6">
    <location>
        <begin position="131"/>
        <end position="154"/>
    </location>
</feature>
<feature type="transmembrane region" description="Helical; Name=4" evidence="2">
    <location>
        <begin position="155"/>
        <end position="174"/>
    </location>
</feature>
<feature type="topological domain" description="Extracellular" evidence="6">
    <location>
        <begin position="175"/>
        <end position="195"/>
    </location>
</feature>
<feature type="transmembrane region" description="Helical; Name=5" evidence="2">
    <location>
        <begin position="196"/>
        <end position="216"/>
    </location>
</feature>
<feature type="topological domain" description="Cytoplasmic" evidence="6">
    <location>
        <begin position="217"/>
        <end position="241"/>
    </location>
</feature>
<feature type="transmembrane region" description="Helical; Name=6" evidence="2">
    <location>
        <begin position="242"/>
        <end position="261"/>
    </location>
</feature>
<feature type="topological domain" description="Extracellular" evidence="6">
    <location>
        <begin position="262"/>
        <end position="282"/>
    </location>
</feature>
<feature type="transmembrane region" description="Helical; Name=7" evidence="2">
    <location>
        <begin position="283"/>
        <end position="302"/>
    </location>
</feature>
<feature type="topological domain" description="Cytoplasmic" evidence="6">
    <location>
        <begin position="303"/>
        <end position="352"/>
    </location>
</feature>
<feature type="region of interest" description="Important for chemokine binding and signaling" evidence="1">
    <location>
        <begin position="1"/>
        <end position="21"/>
    </location>
</feature>
<feature type="region of interest" description="Chemokine binding" evidence="1">
    <location>
        <begin position="94"/>
        <end position="97"/>
    </location>
</feature>
<feature type="region of interest" description="Chemokine binding" evidence="1">
    <location>
        <begin position="113"/>
        <end position="117"/>
    </location>
</feature>
<feature type="region of interest" description="Involved in dimerization; when bound to chemokine" evidence="1">
    <location>
        <begin position="135"/>
        <end position="147"/>
    </location>
</feature>
<feature type="region of interest" description="Chemokine binding, important for signaling" evidence="1">
    <location>
        <begin position="186"/>
        <end position="190"/>
    </location>
</feature>
<feature type="region of interest" description="Involved in dimerization" evidence="1">
    <location>
        <begin position="191"/>
        <end position="210"/>
    </location>
</feature>
<feature type="region of interest" description="Involved in dimerization" evidence="1">
    <location>
        <begin position="266"/>
        <end position="268"/>
    </location>
</feature>
<feature type="region of interest" description="Disordered" evidence="5">
    <location>
        <begin position="329"/>
        <end position="352"/>
    </location>
</feature>
<feature type="short sequence motif" description="Important for signaling" evidence="1">
    <location>
        <begin position="133"/>
        <end position="135"/>
    </location>
</feature>
<feature type="compositionally biased region" description="Low complexity" evidence="5">
    <location>
        <begin position="337"/>
        <end position="352"/>
    </location>
</feature>
<feature type="site" description="Chemokine" evidence="1">
    <location>
        <position position="171"/>
    </location>
</feature>
<feature type="site" description="Chemokine" evidence="1">
    <location>
        <position position="288"/>
    </location>
</feature>
<feature type="modified residue" description="Sulfotyrosine" evidence="2">
    <location>
        <position position="7"/>
    </location>
</feature>
<feature type="modified residue" description="Sulfotyrosine" evidence="2">
    <location>
        <position position="12"/>
    </location>
</feature>
<feature type="modified residue" description="Sulfotyrosine" evidence="2">
    <location>
        <position position="21"/>
    </location>
</feature>
<feature type="modified residue" description="Phosphoserine" evidence="2">
    <location>
        <position position="319"/>
    </location>
</feature>
<feature type="modified residue" description="Phosphoserine" evidence="2">
    <location>
        <position position="321"/>
    </location>
</feature>
<feature type="modified residue" description="Phosphoserine; by PKC and GRK6" evidence="2">
    <location>
        <position position="324"/>
    </location>
</feature>
<feature type="modified residue" description="Phosphoserine; by PKC and GRK6" evidence="2">
    <location>
        <position position="325"/>
    </location>
</feature>
<feature type="modified residue" description="Phosphoserine; by GRK6" evidence="2">
    <location>
        <position position="330"/>
    </location>
</feature>
<feature type="modified residue" description="Phosphoserine; by GRK6" evidence="2">
    <location>
        <position position="339"/>
    </location>
</feature>
<feature type="modified residue" description="Phosphoserine" evidence="2">
    <location>
        <position position="348"/>
    </location>
</feature>
<feature type="modified residue" description="Phosphoserine" evidence="2">
    <location>
        <position position="351"/>
    </location>
</feature>
<feature type="glycosylation site" description="N-linked (GlcNAc...) asparagine" evidence="1">
    <location>
        <position position="11"/>
    </location>
</feature>
<feature type="glycosylation site" description="O-linked (Xyl...) (chondroitin sulfate) serine" evidence="2">
    <location>
        <position position="18"/>
    </location>
</feature>
<feature type="disulfide bond" evidence="4">
    <location>
        <begin position="28"/>
        <end position="274"/>
    </location>
</feature>
<feature type="disulfide bond" evidence="4">
    <location>
        <begin position="109"/>
        <end position="186"/>
    </location>
</feature>
<feature type="cross-link" description="Glycyl lysine isopeptide (Lys-Gly) (interchain with G-Cter in ubiquitin)" evidence="2">
    <location>
        <position position="331"/>
    </location>
</feature>
<comment type="function">
    <text evidence="2 3">Receptor for the C-X-C chemokine CXCL12/SDF-1 that transduces a signal by increasing intracellular calcium ion levels and enhancing MAPK1/MAPK3 activation. Involved in the AKT signaling cascade (By similarity). Plays a role in regulation of cell migration, e.g. during wound healing. Acts as a receptor for extracellular ubiquitin; leading to enhanced intracellular calcium ions and reduced cellular cAMP levels. Binds bacterial lipopolysaccharide (LPS) et mediates LPS-induced inflammatory response, including TNF secretion by monocytes (By similarity). Involved in hematopoiesis and in cardiac ventricular septum formation. Also plays an essential role in vascularization of the gastrointestinal tract, probably by regulating vascular branching and/or remodeling processes in endothelial cells. Involved in cerebellar development. In the CNS, could mediate hippocampal-neuron survival (By similarity).</text>
</comment>
<comment type="subunit">
    <text evidence="2">Monomer. Can form homodimers. Interacts with CD164. Interacts with ARRB2; the interaction is dependent on the C-terminal phosphorylation of CXCR4 and allows activation of MAPK1 and MAPK3. Interacts with ARR3; the interaction is dependent on the C-terminal phosphorylation of CXCR4 and modulates calcium mobilization. Interacts with RNF113A; the interaction, enhanced by CXCL12, promotes CXCR4 ubiquitination and subsequent degradation. Interacts (via the cytoplasmic C-terminal) with ITCH (via the WW domains I and II); the interaction, enhanced by CXCL12, promotes CXCR4 ubiquitination and leads to its degradation. Interacts with extracellular ubiquitin. Interacts with DBN1; this interaction is enhanced by antigenic stimulation. Following LPS binding, may form a complex with GDF5, HSP90AA1 and HSPA8.</text>
</comment>
<comment type="subcellular location">
    <subcellularLocation>
        <location evidence="2">Cell membrane</location>
        <topology evidence="2">Multi-pass membrane protein</topology>
    </subcellularLocation>
    <subcellularLocation>
        <location evidence="1">Cell junction</location>
    </subcellularLocation>
    <subcellularLocation>
        <location evidence="1">Early endosome</location>
    </subcellularLocation>
    <subcellularLocation>
        <location evidence="1">Late endosome</location>
    </subcellularLocation>
    <subcellularLocation>
        <location evidence="1">Lysosome</location>
    </subcellularLocation>
    <text evidence="1">In unstimulated cells, diffuse pattern on plasma membrane. On agonist stimulation, colocalizes with ITCH at the plasma membrane where it becomes ubiquitinated (By similarity). In the presence of antigen, distributes to the immunological synapse forming at the T-cell-APC contact area, where it localizes at the peripheral and distal supramolecular activation cluster (SMAC) (By similarity).</text>
</comment>
<comment type="PTM">
    <text evidence="2">Phosphorylated on agonist stimulation. Rapidly phosphorylated on serine and threonine residues in the C-terminal. Phosphorylation at Ser-324 and Ser-325 leads to recruitment of ITCH, ubiquitination and protein degradation.</text>
</comment>
<comment type="PTM">
    <text evidence="2">Ubiquitinated after ligand binding, leading to its degradation. Ubiquitinated by ITCH at the cell membrane on agonist stimulation. The ubiquitin-dependent mechanism, endosomal sorting complex required for transport (ESCRT), then targets CXCR4 for lysosomal degradation. This process is dependent also on prior Ser-/Thr-phosphorylation in the C-terminal of CXCR4. Also binding of ARRB1 to STAM negatively regulates CXCR4 sorting to lysosomes though modulating ubiquitination of SFR5S.</text>
</comment>
<comment type="PTM">
    <text evidence="2">Sulfation is required for efficient binding of CXCL12/SDF-1alpha and promotes its dimerization.</text>
</comment>
<comment type="PTM">
    <text evidence="2">O- and N-glycosylated. N-glycosylation can mask coreceptor function. The O-glycosylation chondroitin sulfate attachment does not affect interaction with CXCL12/SDF-1alpha nor its coreceptor activity.</text>
</comment>
<comment type="similarity">
    <text evidence="4">Belongs to the G-protein coupled receptor 1 family.</text>
</comment>